<gene>
    <name evidence="6" type="primary">Wfdc12</name>
</gene>
<accession>Q6IE40</accession>
<feature type="signal peptide" evidence="3">
    <location>
        <begin position="1"/>
        <end position="21"/>
    </location>
</feature>
<feature type="chain" id="PRO_0000041392" description="WAP four-disulfide core domain protein 12" evidence="3">
    <location>
        <begin position="22"/>
        <end position="78"/>
    </location>
</feature>
<feature type="domain" description="WAP" evidence="4">
    <location>
        <begin position="25"/>
        <end position="72"/>
    </location>
</feature>
<feature type="disulfide bond" evidence="2 4">
    <location>
        <begin position="32"/>
        <end position="60"/>
    </location>
</feature>
<feature type="disulfide bond" evidence="2 4">
    <location>
        <begin position="39"/>
        <end position="64"/>
    </location>
</feature>
<feature type="disulfide bond" evidence="2 4">
    <location>
        <begin position="47"/>
        <end position="59"/>
    </location>
</feature>
<feature type="disulfide bond" evidence="2 4">
    <location>
        <begin position="53"/>
        <end position="68"/>
    </location>
</feature>
<name>WFD12_RAT</name>
<proteinExistence type="inferred from homology"/>
<sequence length="78" mass="8665">MWPNSILVLTVLLISSTLVTGGGVKGAEKGVCPPDNVRCIRGEDPQCHNDNDCKDQKICCYWHCGFKCVQPVKDSWEQ</sequence>
<dbReference type="EMBL" id="AC123113">
    <property type="status" value="NOT_ANNOTATED_CDS"/>
    <property type="molecule type" value="Genomic_DNA"/>
</dbReference>
<dbReference type="EMBL" id="BN000353">
    <property type="protein sequence ID" value="CAE51405.1"/>
    <property type="molecule type" value="mRNA"/>
</dbReference>
<dbReference type="RefSeq" id="NP_001008866.1">
    <property type="nucleotide sequence ID" value="NM_001008866.1"/>
</dbReference>
<dbReference type="SMR" id="Q6IE40"/>
<dbReference type="FunCoup" id="Q6IE40">
    <property type="interactions" value="12"/>
</dbReference>
<dbReference type="STRING" id="10116.ENSRNOP00000047287"/>
<dbReference type="PhosphoSitePlus" id="Q6IE40"/>
<dbReference type="PaxDb" id="10116-ENSRNOP00000047287"/>
<dbReference type="Ensembl" id="ENSRNOT00000041980.3">
    <property type="protein sequence ID" value="ENSRNOP00000047287.2"/>
    <property type="gene ID" value="ENSRNOG00000032412.3"/>
</dbReference>
<dbReference type="UCSC" id="RGD:1303229">
    <property type="organism name" value="rat"/>
</dbReference>
<dbReference type="AGR" id="RGD:1303229"/>
<dbReference type="RGD" id="1303229">
    <property type="gene designation" value="Wfdc12"/>
</dbReference>
<dbReference type="GeneTree" id="ENSGT00390000012286"/>
<dbReference type="HOGENOM" id="CLU_172659_0_0_1"/>
<dbReference type="InParanoid" id="Q6IE40"/>
<dbReference type="OMA" id="DNVRCIR"/>
<dbReference type="OrthoDB" id="4473401at2759"/>
<dbReference type="PhylomeDB" id="Q6IE40"/>
<dbReference type="PRO" id="PR:Q6IE40"/>
<dbReference type="Proteomes" id="UP000002494">
    <property type="component" value="Chromosome 3"/>
</dbReference>
<dbReference type="Bgee" id="ENSRNOG00000032412">
    <property type="expression patterns" value="Expressed in esophagus and 3 other cell types or tissues"/>
</dbReference>
<dbReference type="GO" id="GO:0005615">
    <property type="term" value="C:extracellular space"/>
    <property type="evidence" value="ECO:0000318"/>
    <property type="project" value="GO_Central"/>
</dbReference>
<dbReference type="GO" id="GO:0004867">
    <property type="term" value="F:serine-type endopeptidase inhibitor activity"/>
    <property type="evidence" value="ECO:0000318"/>
    <property type="project" value="GO_Central"/>
</dbReference>
<dbReference type="GO" id="GO:0019731">
    <property type="term" value="P:antibacterial humoral response"/>
    <property type="evidence" value="ECO:0000318"/>
    <property type="project" value="GO_Central"/>
</dbReference>
<dbReference type="GO" id="GO:0042742">
    <property type="term" value="P:defense response to bacterium"/>
    <property type="evidence" value="ECO:0000250"/>
    <property type="project" value="UniProtKB"/>
</dbReference>
<dbReference type="GO" id="GO:0045087">
    <property type="term" value="P:innate immune response"/>
    <property type="evidence" value="ECO:0000318"/>
    <property type="project" value="GO_Central"/>
</dbReference>
<dbReference type="FunFam" id="4.10.75.10:FF:000005">
    <property type="entry name" value="WAP four-disulfide core domain protein 12"/>
    <property type="match status" value="1"/>
</dbReference>
<dbReference type="Gene3D" id="4.10.75.10">
    <property type="entry name" value="Elafin-like"/>
    <property type="match status" value="1"/>
</dbReference>
<dbReference type="InterPro" id="IPR036645">
    <property type="entry name" value="Elafin-like_sf"/>
</dbReference>
<dbReference type="InterPro" id="IPR008197">
    <property type="entry name" value="WAP_dom"/>
</dbReference>
<dbReference type="Pfam" id="PF00095">
    <property type="entry name" value="WAP"/>
    <property type="match status" value="1"/>
</dbReference>
<dbReference type="SUPFAM" id="SSF57256">
    <property type="entry name" value="Elafin-like"/>
    <property type="match status" value="1"/>
</dbReference>
<dbReference type="PROSITE" id="PS51390">
    <property type="entry name" value="WAP"/>
    <property type="match status" value="1"/>
</dbReference>
<keyword id="KW-0044">Antibiotic</keyword>
<keyword id="KW-0929">Antimicrobial</keyword>
<keyword id="KW-1015">Disulfide bond</keyword>
<keyword id="KW-0646">Protease inhibitor</keyword>
<keyword id="KW-1185">Reference proteome</keyword>
<keyword id="KW-0964">Secreted</keyword>
<keyword id="KW-0722">Serine protease inhibitor</keyword>
<keyword id="KW-0732">Signal</keyword>
<organism>
    <name type="scientific">Rattus norvegicus</name>
    <name type="common">Rat</name>
    <dbReference type="NCBI Taxonomy" id="10116"/>
    <lineage>
        <taxon>Eukaryota</taxon>
        <taxon>Metazoa</taxon>
        <taxon>Chordata</taxon>
        <taxon>Craniata</taxon>
        <taxon>Vertebrata</taxon>
        <taxon>Euteleostomi</taxon>
        <taxon>Mammalia</taxon>
        <taxon>Eutheria</taxon>
        <taxon>Euarchontoglires</taxon>
        <taxon>Glires</taxon>
        <taxon>Rodentia</taxon>
        <taxon>Myomorpha</taxon>
        <taxon>Muroidea</taxon>
        <taxon>Muridae</taxon>
        <taxon>Murinae</taxon>
        <taxon>Rattus</taxon>
    </lineage>
</organism>
<evidence type="ECO:0000250" key="1"/>
<evidence type="ECO:0000250" key="2">
    <source>
        <dbReference type="UniProtKB" id="P19957"/>
    </source>
</evidence>
<evidence type="ECO:0000255" key="3"/>
<evidence type="ECO:0000255" key="4">
    <source>
        <dbReference type="PROSITE-ProRule" id="PRU00722"/>
    </source>
</evidence>
<evidence type="ECO:0000305" key="5"/>
<evidence type="ECO:0000312" key="6">
    <source>
        <dbReference type="EMBL" id="CAE51405.1"/>
    </source>
</evidence>
<reference key="1">
    <citation type="journal article" date="2004" name="Nature">
        <title>Genome sequence of the Brown Norway rat yields insights into mammalian evolution.</title>
        <authorList>
            <person name="Gibbs R.A."/>
            <person name="Weinstock G.M."/>
            <person name="Metzker M.L."/>
            <person name="Muzny D.M."/>
            <person name="Sodergren E.J."/>
            <person name="Scherer S."/>
            <person name="Scott G."/>
            <person name="Steffen D."/>
            <person name="Worley K.C."/>
            <person name="Burch P.E."/>
            <person name="Okwuonu G."/>
            <person name="Hines S."/>
            <person name="Lewis L."/>
            <person name="Deramo C."/>
            <person name="Delgado O."/>
            <person name="Dugan-Rocha S."/>
            <person name="Miner G."/>
            <person name="Morgan M."/>
            <person name="Hawes A."/>
            <person name="Gill R."/>
            <person name="Holt R.A."/>
            <person name="Adams M.D."/>
            <person name="Amanatides P.G."/>
            <person name="Baden-Tillson H."/>
            <person name="Barnstead M."/>
            <person name="Chin S."/>
            <person name="Evans C.A."/>
            <person name="Ferriera S."/>
            <person name="Fosler C."/>
            <person name="Glodek A."/>
            <person name="Gu Z."/>
            <person name="Jennings D."/>
            <person name="Kraft C.L."/>
            <person name="Nguyen T."/>
            <person name="Pfannkoch C.M."/>
            <person name="Sitter C."/>
            <person name="Sutton G.G."/>
            <person name="Venter J.C."/>
            <person name="Woodage T."/>
            <person name="Smith D."/>
            <person name="Lee H.-M."/>
            <person name="Gustafson E."/>
            <person name="Cahill P."/>
            <person name="Kana A."/>
            <person name="Doucette-Stamm L."/>
            <person name="Weinstock K."/>
            <person name="Fechtel K."/>
            <person name="Weiss R.B."/>
            <person name="Dunn D.M."/>
            <person name="Green E.D."/>
            <person name="Blakesley R.W."/>
            <person name="Bouffard G.G."/>
            <person name="De Jong P.J."/>
            <person name="Osoegawa K."/>
            <person name="Zhu B."/>
            <person name="Marra M."/>
            <person name="Schein J."/>
            <person name="Bosdet I."/>
            <person name="Fjell C."/>
            <person name="Jones S."/>
            <person name="Krzywinski M."/>
            <person name="Mathewson C."/>
            <person name="Siddiqui A."/>
            <person name="Wye N."/>
            <person name="McPherson J."/>
            <person name="Zhao S."/>
            <person name="Fraser C.M."/>
            <person name="Shetty J."/>
            <person name="Shatsman S."/>
            <person name="Geer K."/>
            <person name="Chen Y."/>
            <person name="Abramzon S."/>
            <person name="Nierman W.C."/>
            <person name="Havlak P.H."/>
            <person name="Chen R."/>
            <person name="Durbin K.J."/>
            <person name="Egan A."/>
            <person name="Ren Y."/>
            <person name="Song X.-Z."/>
            <person name="Li B."/>
            <person name="Liu Y."/>
            <person name="Qin X."/>
            <person name="Cawley S."/>
            <person name="Cooney A.J."/>
            <person name="D'Souza L.M."/>
            <person name="Martin K."/>
            <person name="Wu J.Q."/>
            <person name="Gonzalez-Garay M.L."/>
            <person name="Jackson A.R."/>
            <person name="Kalafus K.J."/>
            <person name="McLeod M.P."/>
            <person name="Milosavljevic A."/>
            <person name="Virk D."/>
            <person name="Volkov A."/>
            <person name="Wheeler D.A."/>
            <person name="Zhang Z."/>
            <person name="Bailey J.A."/>
            <person name="Eichler E.E."/>
            <person name="Tuzun E."/>
            <person name="Birney E."/>
            <person name="Mongin E."/>
            <person name="Ureta-Vidal A."/>
            <person name="Woodwark C."/>
            <person name="Zdobnov E."/>
            <person name="Bork P."/>
            <person name="Suyama M."/>
            <person name="Torrents D."/>
            <person name="Alexandersson M."/>
            <person name="Trask B.J."/>
            <person name="Young J.M."/>
            <person name="Huang H."/>
            <person name="Wang H."/>
            <person name="Xing H."/>
            <person name="Daniels S."/>
            <person name="Gietzen D."/>
            <person name="Schmidt J."/>
            <person name="Stevens K."/>
            <person name="Vitt U."/>
            <person name="Wingrove J."/>
            <person name="Camara F."/>
            <person name="Mar Alba M."/>
            <person name="Abril J.F."/>
            <person name="Guigo R."/>
            <person name="Smit A."/>
            <person name="Dubchak I."/>
            <person name="Rubin E.M."/>
            <person name="Couronne O."/>
            <person name="Poliakov A."/>
            <person name="Huebner N."/>
            <person name="Ganten D."/>
            <person name="Goesele C."/>
            <person name="Hummel O."/>
            <person name="Kreitler T."/>
            <person name="Lee Y.-A."/>
            <person name="Monti J."/>
            <person name="Schulz H."/>
            <person name="Zimdahl H."/>
            <person name="Himmelbauer H."/>
            <person name="Lehrach H."/>
            <person name="Jacob H.J."/>
            <person name="Bromberg S."/>
            <person name="Gullings-Handley J."/>
            <person name="Jensen-Seaman M.I."/>
            <person name="Kwitek A.E."/>
            <person name="Lazar J."/>
            <person name="Pasko D."/>
            <person name="Tonellato P.J."/>
            <person name="Twigger S."/>
            <person name="Ponting C.P."/>
            <person name="Duarte J.M."/>
            <person name="Rice S."/>
            <person name="Goodstadt L."/>
            <person name="Beatson S.A."/>
            <person name="Emes R.D."/>
            <person name="Winter E.E."/>
            <person name="Webber C."/>
            <person name="Brandt P."/>
            <person name="Nyakatura G."/>
            <person name="Adetobi M."/>
            <person name="Chiaromonte F."/>
            <person name="Elnitski L."/>
            <person name="Eswara P."/>
            <person name="Hardison R.C."/>
            <person name="Hou M."/>
            <person name="Kolbe D."/>
            <person name="Makova K."/>
            <person name="Miller W."/>
            <person name="Nekrutenko A."/>
            <person name="Riemer C."/>
            <person name="Schwartz S."/>
            <person name="Taylor J."/>
            <person name="Yang S."/>
            <person name="Zhang Y."/>
            <person name="Lindpaintner K."/>
            <person name="Andrews T.D."/>
            <person name="Caccamo M."/>
            <person name="Clamp M."/>
            <person name="Clarke L."/>
            <person name="Curwen V."/>
            <person name="Durbin R.M."/>
            <person name="Eyras E."/>
            <person name="Searle S.M."/>
            <person name="Cooper G.M."/>
            <person name="Batzoglou S."/>
            <person name="Brudno M."/>
            <person name="Sidow A."/>
            <person name="Stone E.A."/>
            <person name="Payseur B.A."/>
            <person name="Bourque G."/>
            <person name="Lopez-Otin C."/>
            <person name="Puente X.S."/>
            <person name="Chakrabarti K."/>
            <person name="Chatterji S."/>
            <person name="Dewey C."/>
            <person name="Pachter L."/>
            <person name="Bray N."/>
            <person name="Yap V.B."/>
            <person name="Caspi A."/>
            <person name="Tesler G."/>
            <person name="Pevzner P.A."/>
            <person name="Haussler D."/>
            <person name="Roskin K.M."/>
            <person name="Baertsch R."/>
            <person name="Clawson H."/>
            <person name="Furey T.S."/>
            <person name="Hinrichs A.S."/>
            <person name="Karolchik D."/>
            <person name="Kent W.J."/>
            <person name="Rosenbloom K.R."/>
            <person name="Trumbower H."/>
            <person name="Weirauch M."/>
            <person name="Cooper D.N."/>
            <person name="Stenson P.D."/>
            <person name="Ma B."/>
            <person name="Brent M."/>
            <person name="Arumugam M."/>
            <person name="Shteynberg D."/>
            <person name="Copley R.R."/>
            <person name="Taylor M.S."/>
            <person name="Riethman H."/>
            <person name="Mudunuri U."/>
            <person name="Peterson J."/>
            <person name="Guyer M."/>
            <person name="Felsenfeld A."/>
            <person name="Old S."/>
            <person name="Mockrin S."/>
            <person name="Collins F.S."/>
        </authorList>
    </citation>
    <scope>NUCLEOTIDE SEQUENCE [LARGE SCALE GENOMIC DNA]</scope>
    <source>
        <strain>Brown Norway</strain>
    </source>
</reference>
<reference evidence="5 6" key="2">
    <citation type="journal article" date="2004" name="Genome Res.">
        <title>A genomic analysis of rat proteases and protease inhibitors.</title>
        <authorList>
            <person name="Puente X.S."/>
            <person name="Lopez-Otin C."/>
        </authorList>
    </citation>
    <scope>IDENTIFICATION</scope>
</reference>
<protein>
    <recommendedName>
        <fullName>WAP four-disulfide core domain protein 12</fullName>
    </recommendedName>
</protein>
<comment type="function">
    <text evidence="1">Antibacterial protein. Putative acid-stable proteinase inhibitor (By similarity).</text>
</comment>
<comment type="subcellular location">
    <subcellularLocation>
        <location evidence="5">Secreted</location>
    </subcellularLocation>
</comment>